<proteinExistence type="inferred from homology"/>
<evidence type="ECO:0000255" key="1">
    <source>
        <dbReference type="HAMAP-Rule" id="MF_01358"/>
    </source>
</evidence>
<protein>
    <recommendedName>
        <fullName evidence="1">NADH-quinone oxidoreductase subunit D</fullName>
        <ecNumber evidence="1">7.1.1.-</ecNumber>
    </recommendedName>
    <alternativeName>
        <fullName evidence="1">NADH dehydrogenase I subunit D</fullName>
    </alternativeName>
    <alternativeName>
        <fullName evidence="1">NDH-1 subunit D</fullName>
    </alternativeName>
</protein>
<organism>
    <name type="scientific">Janthinobacterium sp. (strain Marseille)</name>
    <name type="common">Minibacterium massiliensis</name>
    <dbReference type="NCBI Taxonomy" id="375286"/>
    <lineage>
        <taxon>Bacteria</taxon>
        <taxon>Pseudomonadati</taxon>
        <taxon>Pseudomonadota</taxon>
        <taxon>Betaproteobacteria</taxon>
        <taxon>Burkholderiales</taxon>
        <taxon>Oxalobacteraceae</taxon>
        <taxon>Janthinobacterium</taxon>
    </lineage>
</organism>
<keyword id="KW-0997">Cell inner membrane</keyword>
<keyword id="KW-1003">Cell membrane</keyword>
<keyword id="KW-0472">Membrane</keyword>
<keyword id="KW-0520">NAD</keyword>
<keyword id="KW-0874">Quinone</keyword>
<keyword id="KW-1278">Translocase</keyword>
<keyword id="KW-0813">Transport</keyword>
<keyword id="KW-0830">Ubiquinone</keyword>
<comment type="function">
    <text evidence="1">NDH-1 shuttles electrons from NADH, via FMN and iron-sulfur (Fe-S) centers, to quinones in the respiratory chain. The immediate electron acceptor for the enzyme in this species is believed to be ubiquinone. Couples the redox reaction to proton translocation (for every two electrons transferred, four hydrogen ions are translocated across the cytoplasmic membrane), and thus conserves the redox energy in a proton gradient.</text>
</comment>
<comment type="catalytic activity">
    <reaction evidence="1">
        <text>a quinone + NADH + 5 H(+)(in) = a quinol + NAD(+) + 4 H(+)(out)</text>
        <dbReference type="Rhea" id="RHEA:57888"/>
        <dbReference type="ChEBI" id="CHEBI:15378"/>
        <dbReference type="ChEBI" id="CHEBI:24646"/>
        <dbReference type="ChEBI" id="CHEBI:57540"/>
        <dbReference type="ChEBI" id="CHEBI:57945"/>
        <dbReference type="ChEBI" id="CHEBI:132124"/>
    </reaction>
</comment>
<comment type="subunit">
    <text evidence="1">NDH-1 is composed of 14 different subunits. Subunits NuoB, C, D, E, F, and G constitute the peripheral sector of the complex.</text>
</comment>
<comment type="subcellular location">
    <subcellularLocation>
        <location evidence="1">Cell inner membrane</location>
        <topology evidence="1">Peripheral membrane protein</topology>
        <orientation evidence="1">Cytoplasmic side</orientation>
    </subcellularLocation>
</comment>
<comment type="similarity">
    <text evidence="1">Belongs to the complex I 49 kDa subunit family.</text>
</comment>
<accession>A6SY08</accession>
<gene>
    <name evidence="1" type="primary">nuoD</name>
    <name type="ordered locus">mma_1465</name>
</gene>
<feature type="chain" id="PRO_0000371884" description="NADH-quinone oxidoreductase subunit D">
    <location>
        <begin position="1"/>
        <end position="417"/>
    </location>
</feature>
<reference key="1">
    <citation type="journal article" date="2007" name="PLoS Genet.">
        <title>Genome analysis of Minibacterium massiliensis highlights the convergent evolution of water-living bacteria.</title>
        <authorList>
            <person name="Audic S."/>
            <person name="Robert C."/>
            <person name="Campagna B."/>
            <person name="Parinello H."/>
            <person name="Claverie J.-M."/>
            <person name="Raoult D."/>
            <person name="Drancourt M."/>
        </authorList>
    </citation>
    <scope>NUCLEOTIDE SEQUENCE [LARGE SCALE GENOMIC DNA]</scope>
    <source>
        <strain>Marseille</strain>
    </source>
</reference>
<name>NUOD_JANMA</name>
<sequence length="417" mass="47635">MAEIKNYTLNFGPQHPAAHGVLRLVLELDGEVIQRADPHIGLLHRATEKLAEQKTYLQSVPYMDRLDYVSMMCNEHAYVMAIEKMLNIEVPLRAQYIRVMFDEITRILNHLMWLGAHALDVGAMGVFLYAFREREDLMDCYEAVSGARMHAAYYRPGGVYRDLPDTMPQHKASIIRNAKAISQLNENRQGSLLDFIEDFTNRFPTYVDEYETLLTDNRIWKQRLVGIGVVSPERAMAMGFTGAMLRGSGVEWDLRKKQPYEVYDLMDFDIPVGTNGDCYDRYLVRVEEMRQSNRIIKQCVEWLRNNAGPVMTDNHKVAPPSRVGMKSNMEDLIHHFKLFTEGFHVPTGEAYAAVEHPKGEFGVYLISDGANKPYRMKIRAPGFPHLQGLDEMAKGHMIADAVTIIGTQDIVFGEIDR</sequence>
<dbReference type="EC" id="7.1.1.-" evidence="1"/>
<dbReference type="EMBL" id="CP000269">
    <property type="protein sequence ID" value="ABR88407.1"/>
    <property type="molecule type" value="Genomic_DNA"/>
</dbReference>
<dbReference type="RefSeq" id="WP_012079321.1">
    <property type="nucleotide sequence ID" value="NC_009659.1"/>
</dbReference>
<dbReference type="SMR" id="A6SY08"/>
<dbReference type="STRING" id="375286.mma_1465"/>
<dbReference type="KEGG" id="mms:mma_1465"/>
<dbReference type="eggNOG" id="COG0649">
    <property type="taxonomic scope" value="Bacteria"/>
</dbReference>
<dbReference type="HOGENOM" id="CLU_015134_1_1_4"/>
<dbReference type="OrthoDB" id="9801496at2"/>
<dbReference type="Proteomes" id="UP000006388">
    <property type="component" value="Chromosome"/>
</dbReference>
<dbReference type="GO" id="GO:0005886">
    <property type="term" value="C:plasma membrane"/>
    <property type="evidence" value="ECO:0007669"/>
    <property type="project" value="UniProtKB-SubCell"/>
</dbReference>
<dbReference type="GO" id="GO:0051287">
    <property type="term" value="F:NAD binding"/>
    <property type="evidence" value="ECO:0007669"/>
    <property type="project" value="InterPro"/>
</dbReference>
<dbReference type="GO" id="GO:0050136">
    <property type="term" value="F:NADH:ubiquinone reductase (non-electrogenic) activity"/>
    <property type="evidence" value="ECO:0007669"/>
    <property type="project" value="UniProtKB-UniRule"/>
</dbReference>
<dbReference type="GO" id="GO:0048038">
    <property type="term" value="F:quinone binding"/>
    <property type="evidence" value="ECO:0007669"/>
    <property type="project" value="UniProtKB-KW"/>
</dbReference>
<dbReference type="FunFam" id="1.10.645.10:FF:000005">
    <property type="entry name" value="NADH-quinone oxidoreductase subunit D"/>
    <property type="match status" value="1"/>
</dbReference>
<dbReference type="Gene3D" id="1.10.645.10">
    <property type="entry name" value="Cytochrome-c3 Hydrogenase, chain B"/>
    <property type="match status" value="1"/>
</dbReference>
<dbReference type="HAMAP" id="MF_01358">
    <property type="entry name" value="NDH1_NuoD"/>
    <property type="match status" value="1"/>
</dbReference>
<dbReference type="InterPro" id="IPR001135">
    <property type="entry name" value="NADH_Q_OxRdtase_suD"/>
</dbReference>
<dbReference type="InterPro" id="IPR014029">
    <property type="entry name" value="NADH_UbQ_OxRdtase_49kDa_CS"/>
</dbReference>
<dbReference type="InterPro" id="IPR022885">
    <property type="entry name" value="NDH1_su_D/H"/>
</dbReference>
<dbReference type="InterPro" id="IPR029014">
    <property type="entry name" value="NiFe-Hase_large"/>
</dbReference>
<dbReference type="NCBIfam" id="TIGR01962">
    <property type="entry name" value="NuoD"/>
    <property type="match status" value="1"/>
</dbReference>
<dbReference type="NCBIfam" id="NF004739">
    <property type="entry name" value="PRK06075.1"/>
    <property type="match status" value="1"/>
</dbReference>
<dbReference type="PANTHER" id="PTHR11993:SF10">
    <property type="entry name" value="NADH DEHYDROGENASE [UBIQUINONE] IRON-SULFUR PROTEIN 2, MITOCHONDRIAL"/>
    <property type="match status" value="1"/>
</dbReference>
<dbReference type="PANTHER" id="PTHR11993">
    <property type="entry name" value="NADH-UBIQUINONE OXIDOREDUCTASE 49 KDA SUBUNIT"/>
    <property type="match status" value="1"/>
</dbReference>
<dbReference type="Pfam" id="PF00346">
    <property type="entry name" value="Complex1_49kDa"/>
    <property type="match status" value="1"/>
</dbReference>
<dbReference type="SUPFAM" id="SSF56762">
    <property type="entry name" value="HydB/Nqo4-like"/>
    <property type="match status" value="1"/>
</dbReference>
<dbReference type="PROSITE" id="PS00535">
    <property type="entry name" value="COMPLEX1_49K"/>
    <property type="match status" value="1"/>
</dbReference>